<dbReference type="EMBL" id="AE017354">
    <property type="protein sequence ID" value="AAU27451.1"/>
    <property type="molecule type" value="Genomic_DNA"/>
</dbReference>
<dbReference type="RefSeq" id="WP_010947099.1">
    <property type="nucleotide sequence ID" value="NC_002942.5"/>
</dbReference>
<dbReference type="RefSeq" id="YP_095398.1">
    <property type="nucleotide sequence ID" value="NC_002942.5"/>
</dbReference>
<dbReference type="SMR" id="Q5ZVS1"/>
<dbReference type="STRING" id="272624.lpg1369"/>
<dbReference type="PaxDb" id="272624-lpg1369"/>
<dbReference type="GeneID" id="57035359"/>
<dbReference type="KEGG" id="lpn:lpg1369"/>
<dbReference type="PATRIC" id="fig|272624.6.peg.1439"/>
<dbReference type="eggNOG" id="COG0326">
    <property type="taxonomic scope" value="Bacteria"/>
</dbReference>
<dbReference type="HOGENOM" id="CLU_006684_3_0_6"/>
<dbReference type="OrthoDB" id="9802640at2"/>
<dbReference type="Proteomes" id="UP000000609">
    <property type="component" value="Chromosome"/>
</dbReference>
<dbReference type="GO" id="GO:0005737">
    <property type="term" value="C:cytoplasm"/>
    <property type="evidence" value="ECO:0007669"/>
    <property type="project" value="UniProtKB-SubCell"/>
</dbReference>
<dbReference type="GO" id="GO:0005524">
    <property type="term" value="F:ATP binding"/>
    <property type="evidence" value="ECO:0007669"/>
    <property type="project" value="UniProtKB-UniRule"/>
</dbReference>
<dbReference type="GO" id="GO:0016887">
    <property type="term" value="F:ATP hydrolysis activity"/>
    <property type="evidence" value="ECO:0007669"/>
    <property type="project" value="InterPro"/>
</dbReference>
<dbReference type="GO" id="GO:0140662">
    <property type="term" value="F:ATP-dependent protein folding chaperone"/>
    <property type="evidence" value="ECO:0007669"/>
    <property type="project" value="InterPro"/>
</dbReference>
<dbReference type="GO" id="GO:0051082">
    <property type="term" value="F:unfolded protein binding"/>
    <property type="evidence" value="ECO:0007669"/>
    <property type="project" value="UniProtKB-UniRule"/>
</dbReference>
<dbReference type="CDD" id="cd16927">
    <property type="entry name" value="HATPase_Hsp90-like"/>
    <property type="match status" value="1"/>
</dbReference>
<dbReference type="FunFam" id="3.30.230.80:FF:000002">
    <property type="entry name" value="Molecular chaperone HtpG"/>
    <property type="match status" value="1"/>
</dbReference>
<dbReference type="FunFam" id="3.30.565.10:FF:000009">
    <property type="entry name" value="Molecular chaperone HtpG"/>
    <property type="match status" value="1"/>
</dbReference>
<dbReference type="Gene3D" id="3.30.230.80">
    <property type="match status" value="1"/>
</dbReference>
<dbReference type="Gene3D" id="3.40.50.11260">
    <property type="match status" value="1"/>
</dbReference>
<dbReference type="Gene3D" id="1.20.120.790">
    <property type="entry name" value="Heat shock protein 90, C-terminal domain"/>
    <property type="match status" value="1"/>
</dbReference>
<dbReference type="Gene3D" id="3.30.565.10">
    <property type="entry name" value="Histidine kinase-like ATPase, C-terminal domain"/>
    <property type="match status" value="1"/>
</dbReference>
<dbReference type="HAMAP" id="MF_00505">
    <property type="entry name" value="HSP90"/>
    <property type="match status" value="1"/>
</dbReference>
<dbReference type="InterPro" id="IPR036890">
    <property type="entry name" value="HATPase_C_sf"/>
</dbReference>
<dbReference type="InterPro" id="IPR019805">
    <property type="entry name" value="Heat_shock_protein_90_CS"/>
</dbReference>
<dbReference type="InterPro" id="IPR037196">
    <property type="entry name" value="HSP90_C"/>
</dbReference>
<dbReference type="InterPro" id="IPR001404">
    <property type="entry name" value="Hsp90_fam"/>
</dbReference>
<dbReference type="InterPro" id="IPR020575">
    <property type="entry name" value="Hsp90_N"/>
</dbReference>
<dbReference type="InterPro" id="IPR020568">
    <property type="entry name" value="Ribosomal_Su5_D2-typ_SF"/>
</dbReference>
<dbReference type="NCBIfam" id="NF003555">
    <property type="entry name" value="PRK05218.1"/>
    <property type="match status" value="1"/>
</dbReference>
<dbReference type="PANTHER" id="PTHR11528">
    <property type="entry name" value="HEAT SHOCK PROTEIN 90 FAMILY MEMBER"/>
    <property type="match status" value="1"/>
</dbReference>
<dbReference type="Pfam" id="PF13589">
    <property type="entry name" value="HATPase_c_3"/>
    <property type="match status" value="1"/>
</dbReference>
<dbReference type="Pfam" id="PF00183">
    <property type="entry name" value="HSP90"/>
    <property type="match status" value="1"/>
</dbReference>
<dbReference type="PIRSF" id="PIRSF002583">
    <property type="entry name" value="Hsp90"/>
    <property type="match status" value="1"/>
</dbReference>
<dbReference type="PRINTS" id="PR00775">
    <property type="entry name" value="HEATSHOCK90"/>
</dbReference>
<dbReference type="SMART" id="SM00387">
    <property type="entry name" value="HATPase_c"/>
    <property type="match status" value="1"/>
</dbReference>
<dbReference type="SUPFAM" id="SSF55874">
    <property type="entry name" value="ATPase domain of HSP90 chaperone/DNA topoisomerase II/histidine kinase"/>
    <property type="match status" value="1"/>
</dbReference>
<dbReference type="SUPFAM" id="SSF110942">
    <property type="entry name" value="HSP90 C-terminal domain"/>
    <property type="match status" value="1"/>
</dbReference>
<dbReference type="SUPFAM" id="SSF54211">
    <property type="entry name" value="Ribosomal protein S5 domain 2-like"/>
    <property type="match status" value="1"/>
</dbReference>
<dbReference type="PROSITE" id="PS00298">
    <property type="entry name" value="HSP90"/>
    <property type="match status" value="1"/>
</dbReference>
<protein>
    <recommendedName>
        <fullName evidence="1">Chaperone protein HtpG</fullName>
    </recommendedName>
    <alternativeName>
        <fullName evidence="1">Heat shock protein HtpG</fullName>
    </alternativeName>
    <alternativeName>
        <fullName evidence="1">High temperature protein G</fullName>
    </alternativeName>
</protein>
<comment type="function">
    <text evidence="1">Molecular chaperone. Has ATPase activity.</text>
</comment>
<comment type="subunit">
    <text evidence="1">Homodimer.</text>
</comment>
<comment type="subcellular location">
    <subcellularLocation>
        <location evidence="1">Cytoplasm</location>
    </subcellularLocation>
</comment>
<comment type="similarity">
    <text evidence="1">Belongs to the heat shock protein 90 family.</text>
</comment>
<proteinExistence type="inferred from homology"/>
<keyword id="KW-0067">ATP-binding</keyword>
<keyword id="KW-0143">Chaperone</keyword>
<keyword id="KW-0963">Cytoplasm</keyword>
<keyword id="KW-0547">Nucleotide-binding</keyword>
<keyword id="KW-1185">Reference proteome</keyword>
<keyword id="KW-0346">Stress response</keyword>
<organism>
    <name type="scientific">Legionella pneumophila subsp. pneumophila (strain Philadelphia 1 / ATCC 33152 / DSM 7513)</name>
    <dbReference type="NCBI Taxonomy" id="272624"/>
    <lineage>
        <taxon>Bacteria</taxon>
        <taxon>Pseudomonadati</taxon>
        <taxon>Pseudomonadota</taxon>
        <taxon>Gammaproteobacteria</taxon>
        <taxon>Legionellales</taxon>
        <taxon>Legionellaceae</taxon>
        <taxon>Legionella</taxon>
    </lineage>
</organism>
<reference key="1">
    <citation type="journal article" date="2004" name="Science">
        <title>The genomic sequence of the accidental pathogen Legionella pneumophila.</title>
        <authorList>
            <person name="Chien M."/>
            <person name="Morozova I."/>
            <person name="Shi S."/>
            <person name="Sheng H."/>
            <person name="Chen J."/>
            <person name="Gomez S.M."/>
            <person name="Asamani G."/>
            <person name="Hill K."/>
            <person name="Nuara J."/>
            <person name="Feder M."/>
            <person name="Rineer J."/>
            <person name="Greenberg J.J."/>
            <person name="Steshenko V."/>
            <person name="Park S.H."/>
            <person name="Zhao B."/>
            <person name="Teplitskaya E."/>
            <person name="Edwards J.R."/>
            <person name="Pampou S."/>
            <person name="Georghiou A."/>
            <person name="Chou I.-C."/>
            <person name="Iannuccilli W."/>
            <person name="Ulz M.E."/>
            <person name="Kim D.H."/>
            <person name="Geringer-Sameth A."/>
            <person name="Goldsberry C."/>
            <person name="Morozov P."/>
            <person name="Fischer S.G."/>
            <person name="Segal G."/>
            <person name="Qu X."/>
            <person name="Rzhetsky A."/>
            <person name="Zhang P."/>
            <person name="Cayanis E."/>
            <person name="De Jong P.J."/>
            <person name="Ju J."/>
            <person name="Kalachikov S."/>
            <person name="Shuman H.A."/>
            <person name="Russo J.J."/>
        </authorList>
    </citation>
    <scope>NUCLEOTIDE SEQUENCE [LARGE SCALE GENOMIC DNA]</scope>
    <source>
        <strain>Philadelphia 1 / ATCC 33152 / DSM 7513</strain>
    </source>
</reference>
<sequence>MVSKQQTMGFQTEVKQMLHLVVHSLYSNKEIFLRELISNASDALDKLRFLALSNGSLFENDSDLKISIQINEKLQTITISDNGIGLSWEEAVENLGTIAKSGTKEFISQLTGEQAKDSQLIGQFGVGFYSAFIVADKVTVKSRRAGLQPEDGIVWESKGDGEFTIGYEKKSTRGTEITLHLKPENDEFLSDWRIRGIISKYSDHICWPIVMKKLSEEGKESKEFETVNKATALWTLQKSEISEEDYKQLYKHISHDYMDPLTWSHNHVEGKHEYITLLYIPAHAPFDLWQHEAKHGLKLYVKRVFIMDEATQFLPRYLRFVKGIVDASDLPLNISREILQDNKQVESIRAACTKRVLSMLEKMATNDKETYQKFWNEFGLVLKEGPIEDFANKEAIAKLLRFSTTASGSEKQEVSLEEYVSRMKEGQDKIYYITASSYNAAKNSPHLEIFRKKGIEVLLLSDKVDEWLVGYMNEFAGKKLQSISKGKVELGDDETSEQIKEQEKTLEPLIKHIKSVLNERVKDVLLTNRLTDSPACVVADEQDMGLEMQRILQAAGQQVPVSKPIFEINPDHALIKRLHDIQDDNQFELWVTMLFEQAVLAEGGQLDNPADFVNRVNRLLVSS</sequence>
<gene>
    <name evidence="1" type="primary">htpG</name>
    <name type="ordered locus">lpg1369</name>
</gene>
<accession>Q5ZVS1</accession>
<evidence type="ECO:0000255" key="1">
    <source>
        <dbReference type="HAMAP-Rule" id="MF_00505"/>
    </source>
</evidence>
<name>HTPG_LEGPH</name>
<feature type="chain" id="PRO_0000224214" description="Chaperone protein HtpG">
    <location>
        <begin position="1"/>
        <end position="623"/>
    </location>
</feature>
<feature type="region of interest" description="A; substrate-binding" evidence="1">
    <location>
        <begin position="1"/>
        <end position="336"/>
    </location>
</feature>
<feature type="region of interest" description="B" evidence="1">
    <location>
        <begin position="337"/>
        <end position="550"/>
    </location>
</feature>
<feature type="region of interest" description="C" evidence="1">
    <location>
        <begin position="551"/>
        <end position="623"/>
    </location>
</feature>